<feature type="chain" id="PRO_1000002638" description="UDP-N-acetylglucosamine--N-acetylmuramyl-(pentapeptide) pyrophosphoryl-undecaprenol N-acetylglucosamine transferase">
    <location>
        <begin position="1"/>
        <end position="369"/>
    </location>
</feature>
<feature type="binding site" evidence="1">
    <location>
        <begin position="10"/>
        <end position="12"/>
    </location>
    <ligand>
        <name>UDP-N-acetyl-alpha-D-glucosamine</name>
        <dbReference type="ChEBI" id="CHEBI:57705"/>
    </ligand>
</feature>
<feature type="binding site" evidence="1">
    <location>
        <position position="124"/>
    </location>
    <ligand>
        <name>UDP-N-acetyl-alpha-D-glucosamine</name>
        <dbReference type="ChEBI" id="CHEBI:57705"/>
    </ligand>
</feature>
<feature type="binding site" evidence="1">
    <location>
        <position position="166"/>
    </location>
    <ligand>
        <name>UDP-N-acetyl-alpha-D-glucosamine</name>
        <dbReference type="ChEBI" id="CHEBI:57705"/>
    </ligand>
</feature>
<feature type="binding site" evidence="1">
    <location>
        <position position="196"/>
    </location>
    <ligand>
        <name>UDP-N-acetyl-alpha-D-glucosamine</name>
        <dbReference type="ChEBI" id="CHEBI:57705"/>
    </ligand>
</feature>
<feature type="binding site" evidence="1">
    <location>
        <position position="251"/>
    </location>
    <ligand>
        <name>UDP-N-acetyl-alpha-D-glucosamine</name>
        <dbReference type="ChEBI" id="CHEBI:57705"/>
    </ligand>
</feature>
<feature type="binding site" evidence="1">
    <location>
        <position position="296"/>
    </location>
    <ligand>
        <name>UDP-N-acetyl-alpha-D-glucosamine</name>
        <dbReference type="ChEBI" id="CHEBI:57705"/>
    </ligand>
</feature>
<sequence>MKVIISGGGTAGHINPGLAIAKYIKKREPDTEILFIGTERGLEARLVPRENFEIKMIKVRGFKRKLSMDTLVAVKELFQGLAEARKIIKDYKPDLVIGTGGYVCGPVLFNASRMKIPTLVHEQNAFPGVTNKILSKFVDRVAISFKEAEKYFKDKSKVVFTGNPIRSEMLEVSRETARKKLGIPKDMPLVVIFGGSRGAENINSTVAELIKRHKSDLGFYLIYATGEAQYDGIMKKIGEVKSPNINILPYIFDMANAMAAADLVVCRAGAITVSELTALGVPSILIPSPYVTANHQEHNARALERQGASVVILEKNLRPDILYEEITTLLKDRNKLSQMAKNAKSIGITNATERIYEIIKDIMKNKAAG</sequence>
<protein>
    <recommendedName>
        <fullName evidence="1">UDP-N-acetylglucosamine--N-acetylmuramyl-(pentapeptide) pyrophosphoryl-undecaprenol N-acetylglucosamine transferase</fullName>
        <ecNumber evidence="1">2.4.1.227</ecNumber>
    </recommendedName>
    <alternativeName>
        <fullName evidence="1">Undecaprenyl-PP-MurNAc-pentapeptide-UDPGlcNAc GlcNAc transferase</fullName>
    </alternativeName>
</protein>
<keyword id="KW-0131">Cell cycle</keyword>
<keyword id="KW-0132">Cell division</keyword>
<keyword id="KW-1003">Cell membrane</keyword>
<keyword id="KW-0133">Cell shape</keyword>
<keyword id="KW-0961">Cell wall biogenesis/degradation</keyword>
<keyword id="KW-0328">Glycosyltransferase</keyword>
<keyword id="KW-0472">Membrane</keyword>
<keyword id="KW-0573">Peptidoglycan synthesis</keyword>
<keyword id="KW-1185">Reference proteome</keyword>
<keyword id="KW-0808">Transferase</keyword>
<organism>
    <name type="scientific">Acetivibrio thermocellus (strain ATCC 27405 / DSM 1237 / JCM 9322 / NBRC 103400 / NCIMB 10682 / NRRL B-4536 / VPI 7372)</name>
    <name type="common">Clostridium thermocellum</name>
    <dbReference type="NCBI Taxonomy" id="203119"/>
    <lineage>
        <taxon>Bacteria</taxon>
        <taxon>Bacillati</taxon>
        <taxon>Bacillota</taxon>
        <taxon>Clostridia</taxon>
        <taxon>Eubacteriales</taxon>
        <taxon>Oscillospiraceae</taxon>
        <taxon>Acetivibrio</taxon>
    </lineage>
</organism>
<evidence type="ECO:0000255" key="1">
    <source>
        <dbReference type="HAMAP-Rule" id="MF_00033"/>
    </source>
</evidence>
<comment type="function">
    <text evidence="1">Cell wall formation. Catalyzes the transfer of a GlcNAc subunit on undecaprenyl-pyrophosphoryl-MurNAc-pentapeptide (lipid intermediate I) to form undecaprenyl-pyrophosphoryl-MurNAc-(pentapeptide)GlcNAc (lipid intermediate II).</text>
</comment>
<comment type="catalytic activity">
    <reaction evidence="1">
        <text>di-trans,octa-cis-undecaprenyl diphospho-N-acetyl-alpha-D-muramoyl-L-alanyl-D-glutamyl-meso-2,6-diaminopimeloyl-D-alanyl-D-alanine + UDP-N-acetyl-alpha-D-glucosamine = di-trans,octa-cis-undecaprenyl diphospho-[N-acetyl-alpha-D-glucosaminyl-(1-&gt;4)]-N-acetyl-alpha-D-muramoyl-L-alanyl-D-glutamyl-meso-2,6-diaminopimeloyl-D-alanyl-D-alanine + UDP + H(+)</text>
        <dbReference type="Rhea" id="RHEA:31227"/>
        <dbReference type="ChEBI" id="CHEBI:15378"/>
        <dbReference type="ChEBI" id="CHEBI:57705"/>
        <dbReference type="ChEBI" id="CHEBI:58223"/>
        <dbReference type="ChEBI" id="CHEBI:61387"/>
        <dbReference type="ChEBI" id="CHEBI:61388"/>
        <dbReference type="EC" id="2.4.1.227"/>
    </reaction>
</comment>
<comment type="pathway">
    <text evidence="1">Cell wall biogenesis; peptidoglycan biosynthesis.</text>
</comment>
<comment type="subcellular location">
    <subcellularLocation>
        <location evidence="1">Cell membrane</location>
        <topology evidence="1">Peripheral membrane protein</topology>
        <orientation evidence="1">Cytoplasmic side</orientation>
    </subcellularLocation>
</comment>
<comment type="similarity">
    <text evidence="1">Belongs to the glycosyltransferase 28 family. MurG subfamily.</text>
</comment>
<proteinExistence type="inferred from homology"/>
<reference key="1">
    <citation type="submission" date="2007-02" db="EMBL/GenBank/DDBJ databases">
        <title>Complete sequence of Clostridium thermocellum ATCC 27405.</title>
        <authorList>
            <consortium name="US DOE Joint Genome Institute"/>
            <person name="Copeland A."/>
            <person name="Lucas S."/>
            <person name="Lapidus A."/>
            <person name="Barry K."/>
            <person name="Detter J.C."/>
            <person name="Glavina del Rio T."/>
            <person name="Hammon N."/>
            <person name="Israni S."/>
            <person name="Dalin E."/>
            <person name="Tice H."/>
            <person name="Pitluck S."/>
            <person name="Chertkov O."/>
            <person name="Brettin T."/>
            <person name="Bruce D."/>
            <person name="Han C."/>
            <person name="Tapia R."/>
            <person name="Gilna P."/>
            <person name="Schmutz J."/>
            <person name="Larimer F."/>
            <person name="Land M."/>
            <person name="Hauser L."/>
            <person name="Kyrpides N."/>
            <person name="Mikhailova N."/>
            <person name="Wu J.H.D."/>
            <person name="Newcomb M."/>
            <person name="Richardson P."/>
        </authorList>
    </citation>
    <scope>NUCLEOTIDE SEQUENCE [LARGE SCALE GENOMIC DNA]</scope>
    <source>
        <strain>ATCC 27405 / DSM 1237 / JCM 9322 / NBRC 103400 / NCIMB 10682 / NRRL B-4536 / VPI 7372</strain>
    </source>
</reference>
<accession>A3DE27</accession>
<gene>
    <name evidence="1" type="primary">murG</name>
    <name type="ordered locus">Cthe_0974</name>
</gene>
<name>MURG_ACET2</name>
<dbReference type="EC" id="2.4.1.227" evidence="1"/>
<dbReference type="EMBL" id="CP000568">
    <property type="protein sequence ID" value="ABN52206.1"/>
    <property type="molecule type" value="Genomic_DNA"/>
</dbReference>
<dbReference type="RefSeq" id="WP_003515501.1">
    <property type="nucleotide sequence ID" value="NC_009012.1"/>
</dbReference>
<dbReference type="SMR" id="A3DE27"/>
<dbReference type="STRING" id="203119.Cthe_0974"/>
<dbReference type="CAZy" id="GT28">
    <property type="family name" value="Glycosyltransferase Family 28"/>
</dbReference>
<dbReference type="GeneID" id="35803906"/>
<dbReference type="KEGG" id="cth:Cthe_0974"/>
<dbReference type="eggNOG" id="COG0707">
    <property type="taxonomic scope" value="Bacteria"/>
</dbReference>
<dbReference type="HOGENOM" id="CLU_037404_0_1_9"/>
<dbReference type="OrthoDB" id="9808936at2"/>
<dbReference type="UniPathway" id="UPA00219"/>
<dbReference type="Proteomes" id="UP000002145">
    <property type="component" value="Chromosome"/>
</dbReference>
<dbReference type="GO" id="GO:0005886">
    <property type="term" value="C:plasma membrane"/>
    <property type="evidence" value="ECO:0007669"/>
    <property type="project" value="UniProtKB-SubCell"/>
</dbReference>
<dbReference type="GO" id="GO:0051991">
    <property type="term" value="F:UDP-N-acetyl-D-glucosamine:N-acetylmuramoyl-L-alanyl-D-glutamyl-meso-2,6-diaminopimelyl-D-alanyl-D-alanine-diphosphoundecaprenol 4-beta-N-acetylglucosaminlytransferase activity"/>
    <property type="evidence" value="ECO:0007669"/>
    <property type="project" value="RHEA"/>
</dbReference>
<dbReference type="GO" id="GO:0050511">
    <property type="term" value="F:undecaprenyldiphospho-muramoylpentapeptide beta-N-acetylglucosaminyltransferase activity"/>
    <property type="evidence" value="ECO:0007669"/>
    <property type="project" value="UniProtKB-UniRule"/>
</dbReference>
<dbReference type="GO" id="GO:0005975">
    <property type="term" value="P:carbohydrate metabolic process"/>
    <property type="evidence" value="ECO:0007669"/>
    <property type="project" value="InterPro"/>
</dbReference>
<dbReference type="GO" id="GO:0051301">
    <property type="term" value="P:cell division"/>
    <property type="evidence" value="ECO:0007669"/>
    <property type="project" value="UniProtKB-KW"/>
</dbReference>
<dbReference type="GO" id="GO:0071555">
    <property type="term" value="P:cell wall organization"/>
    <property type="evidence" value="ECO:0007669"/>
    <property type="project" value="UniProtKB-KW"/>
</dbReference>
<dbReference type="GO" id="GO:0030259">
    <property type="term" value="P:lipid glycosylation"/>
    <property type="evidence" value="ECO:0007669"/>
    <property type="project" value="UniProtKB-UniRule"/>
</dbReference>
<dbReference type="GO" id="GO:0009252">
    <property type="term" value="P:peptidoglycan biosynthetic process"/>
    <property type="evidence" value="ECO:0007669"/>
    <property type="project" value="UniProtKB-UniRule"/>
</dbReference>
<dbReference type="GO" id="GO:0008360">
    <property type="term" value="P:regulation of cell shape"/>
    <property type="evidence" value="ECO:0007669"/>
    <property type="project" value="UniProtKB-KW"/>
</dbReference>
<dbReference type="CDD" id="cd03785">
    <property type="entry name" value="GT28_MurG"/>
    <property type="match status" value="1"/>
</dbReference>
<dbReference type="Gene3D" id="3.40.50.2000">
    <property type="entry name" value="Glycogen Phosphorylase B"/>
    <property type="match status" value="2"/>
</dbReference>
<dbReference type="HAMAP" id="MF_00033">
    <property type="entry name" value="MurG"/>
    <property type="match status" value="1"/>
</dbReference>
<dbReference type="InterPro" id="IPR006009">
    <property type="entry name" value="GlcNAc_MurG"/>
</dbReference>
<dbReference type="InterPro" id="IPR007235">
    <property type="entry name" value="Glyco_trans_28_C"/>
</dbReference>
<dbReference type="InterPro" id="IPR004276">
    <property type="entry name" value="GlycoTrans_28_N"/>
</dbReference>
<dbReference type="NCBIfam" id="TIGR01133">
    <property type="entry name" value="murG"/>
    <property type="match status" value="1"/>
</dbReference>
<dbReference type="PANTHER" id="PTHR21015:SF22">
    <property type="entry name" value="GLYCOSYLTRANSFERASE"/>
    <property type="match status" value="1"/>
</dbReference>
<dbReference type="PANTHER" id="PTHR21015">
    <property type="entry name" value="UDP-N-ACETYLGLUCOSAMINE--N-ACETYLMURAMYL-(PENTAPEPTIDE) PYROPHOSPHORYL-UNDECAPRENOL N-ACETYLGLUCOSAMINE TRANSFERASE 1"/>
    <property type="match status" value="1"/>
</dbReference>
<dbReference type="Pfam" id="PF04101">
    <property type="entry name" value="Glyco_tran_28_C"/>
    <property type="match status" value="1"/>
</dbReference>
<dbReference type="Pfam" id="PF03033">
    <property type="entry name" value="Glyco_transf_28"/>
    <property type="match status" value="1"/>
</dbReference>
<dbReference type="SUPFAM" id="SSF53756">
    <property type="entry name" value="UDP-Glycosyltransferase/glycogen phosphorylase"/>
    <property type="match status" value="1"/>
</dbReference>